<organism>
    <name type="scientific">Chironomus thummi thummi</name>
    <name type="common">Midge</name>
    <dbReference type="NCBI Taxonomy" id="7155"/>
    <lineage>
        <taxon>Eukaryota</taxon>
        <taxon>Metazoa</taxon>
        <taxon>Ecdysozoa</taxon>
        <taxon>Arthropoda</taxon>
        <taxon>Hexapoda</taxon>
        <taxon>Insecta</taxon>
        <taxon>Pterygota</taxon>
        <taxon>Neoptera</taxon>
        <taxon>Endopterygota</taxon>
        <taxon>Diptera</taxon>
        <taxon>Nematocera</taxon>
        <taxon>Chironomoidea</taxon>
        <taxon>Chironomidae</taxon>
        <taxon>Chironominae</taxon>
        <taxon>Chironomus</taxon>
    </lineage>
</organism>
<protein>
    <recommendedName>
        <fullName>Histone H3</fullName>
        <shortName>H3</shortName>
    </recommendedName>
</protein>
<comment type="function">
    <text>Core component of nucleosome. Nucleosomes wrap and compact DNA into chromatin, limiting DNA accessibility to the cellular machineries which require DNA as a template. Histones thereby play a central role in transcription regulation, DNA repair, DNA replication and chromosomal stability. DNA accessibility is regulated via a complex set of post-translational modifications of histones, also called histone code, and nucleosome remodeling.</text>
</comment>
<comment type="subunit">
    <text>The nucleosome is a histone octamer containing two molecules each of H2A, H2B, H3 and H4 assembled in one H3-H4 heterotetramer and two H2A-H2B heterodimers. The octamer wraps approximately 147 bp of DNA.</text>
</comment>
<comment type="subcellular location">
    <subcellularLocation>
        <location evidence="1">Nucleus</location>
    </subcellularLocation>
    <subcellularLocation>
        <location evidence="1">Chromosome</location>
    </subcellularLocation>
</comment>
<comment type="PTM">
    <text evidence="1">Phosphorylation at Ser-11 during mitosis and meiosis is crucial for chromosome condensation and cell-cycle progression. Phosphorylation at Ser-11 during interphase is linked to gene activation and restricts the formation of heterochromatin at inappropriate sites (By similarity).</text>
</comment>
<comment type="PTM">
    <text evidence="1">Acetylation is generally linked to gene activation.</text>
</comment>
<comment type="PTM">
    <text evidence="1">Methylation at Lys-5 or Lys-80 is generally associated with active chromatin.</text>
</comment>
<comment type="similarity">
    <text evidence="3">Belongs to the histone H3 family.</text>
</comment>
<accession>P84238</accession>
<accession>P02295</accession>
<accession>P02297</accession>
<accession>P16105</accession>
<accession>P17269</accession>
<accession>P17320</accession>
<name>H3_CHITH</name>
<proteinExistence type="inferred from homology"/>
<sequence length="136" mass="15388">MARTKQTARKSTGGKAPRKQLATKAARKSAPATGGVKKPHRYRPGTVALREIRRYQKSTELLIRKLPFQRLVREIAQDFKTDLRFQSSAVMALQEASEAYLVGLFEDTNLCAIHAKRVTIMPKDIQLARRIRGERA</sequence>
<feature type="initiator methionine" description="Removed" evidence="1">
    <location>
        <position position="1"/>
    </location>
</feature>
<feature type="chain" id="PRO_0000221299" description="Histone H3">
    <location>
        <begin position="2"/>
        <end position="136"/>
    </location>
</feature>
<feature type="region of interest" description="Disordered" evidence="2">
    <location>
        <begin position="1"/>
        <end position="43"/>
    </location>
</feature>
<feature type="modified residue" description="N6-methylated lysine" evidence="1">
    <location>
        <position position="5"/>
    </location>
</feature>
<feature type="modified residue" description="N6-acetyllysine; alternate" evidence="1">
    <location>
        <position position="10"/>
    </location>
</feature>
<feature type="modified residue" description="N6-methylated lysine; alternate" evidence="1">
    <location>
        <position position="10"/>
    </location>
</feature>
<feature type="modified residue" description="Phosphoserine" evidence="1">
    <location>
        <position position="11"/>
    </location>
</feature>
<feature type="modified residue" description="N6-acetyllysine; alternate" evidence="1">
    <location>
        <position position="15"/>
    </location>
</feature>
<feature type="modified residue" description="N6-methylated lysine; alternate" evidence="1">
    <location>
        <position position="15"/>
    </location>
</feature>
<feature type="modified residue" description="N6-acetyllysine" evidence="1">
    <location>
        <position position="19"/>
    </location>
</feature>
<feature type="modified residue" description="N6-acetyllysine" evidence="1">
    <location>
        <position position="24"/>
    </location>
</feature>
<feature type="modified residue" description="N6-methylated lysine" evidence="1">
    <location>
        <position position="28"/>
    </location>
</feature>
<feature type="modified residue" description="N6-methylated lysine" evidence="1">
    <location>
        <position position="37"/>
    </location>
</feature>
<feature type="modified residue" description="N6-methylated lysine" evidence="1">
    <location>
        <position position="38"/>
    </location>
</feature>
<feature type="modified residue" description="N6-methylated lysine" evidence="1">
    <location>
        <position position="80"/>
    </location>
</feature>
<reference key="1">
    <citation type="journal article" date="1990" name="J. Mol. Biol.">
        <title>New foldback transposable element TFB1 found in histone genes of the midge Chironomus thummi.</title>
        <authorList>
            <person name="Hankeln T."/>
            <person name="Schmidt E.R."/>
        </authorList>
    </citation>
    <scope>NUCLEOTIDE SEQUENCE [GENOMIC DNA]</scope>
</reference>
<reference key="2">
    <citation type="journal article" date="1993" name="J. Mol. Biol.">
        <title>Divergent evolution of an 'orphon' histone gene cluster in Chironomus.</title>
        <authorList>
            <person name="Hankeln T."/>
            <person name="Schmidt E.R."/>
        </authorList>
    </citation>
    <scope>NUCLEOTIDE SEQUENCE [GENOMIC DNA]</scope>
</reference>
<evidence type="ECO:0000250" key="1"/>
<evidence type="ECO:0000256" key="2">
    <source>
        <dbReference type="SAM" id="MobiDB-lite"/>
    </source>
</evidence>
<evidence type="ECO:0000305" key="3"/>
<dbReference type="EMBL" id="X56335">
    <property type="protein sequence ID" value="CAA39771.1"/>
    <property type="molecule type" value="Genomic_DNA"/>
</dbReference>
<dbReference type="EMBL" id="X72803">
    <property type="protein sequence ID" value="CAA51324.1"/>
    <property type="molecule type" value="Genomic_DNA"/>
</dbReference>
<dbReference type="SMR" id="P84238"/>
<dbReference type="GO" id="GO:0000786">
    <property type="term" value="C:nucleosome"/>
    <property type="evidence" value="ECO:0007669"/>
    <property type="project" value="UniProtKB-KW"/>
</dbReference>
<dbReference type="GO" id="GO:0005634">
    <property type="term" value="C:nucleus"/>
    <property type="evidence" value="ECO:0007669"/>
    <property type="project" value="UniProtKB-SubCell"/>
</dbReference>
<dbReference type="GO" id="GO:0003677">
    <property type="term" value="F:DNA binding"/>
    <property type="evidence" value="ECO:0007669"/>
    <property type="project" value="UniProtKB-KW"/>
</dbReference>
<dbReference type="GO" id="GO:0046982">
    <property type="term" value="F:protein heterodimerization activity"/>
    <property type="evidence" value="ECO:0007669"/>
    <property type="project" value="InterPro"/>
</dbReference>
<dbReference type="GO" id="GO:0030527">
    <property type="term" value="F:structural constituent of chromatin"/>
    <property type="evidence" value="ECO:0007669"/>
    <property type="project" value="InterPro"/>
</dbReference>
<dbReference type="CDD" id="cd22911">
    <property type="entry name" value="HFD_H3"/>
    <property type="match status" value="1"/>
</dbReference>
<dbReference type="FunFam" id="1.10.20.10:FF:000078">
    <property type="entry name" value="Histone H3"/>
    <property type="match status" value="1"/>
</dbReference>
<dbReference type="FunFam" id="1.10.20.10:FF:000044">
    <property type="entry name" value="Histone H3.3"/>
    <property type="match status" value="1"/>
</dbReference>
<dbReference type="Gene3D" id="1.10.20.10">
    <property type="entry name" value="Histone, subunit A"/>
    <property type="match status" value="1"/>
</dbReference>
<dbReference type="InterPro" id="IPR009072">
    <property type="entry name" value="Histone-fold"/>
</dbReference>
<dbReference type="InterPro" id="IPR007125">
    <property type="entry name" value="Histone_H2A/H2B/H3"/>
</dbReference>
<dbReference type="InterPro" id="IPR000164">
    <property type="entry name" value="Histone_H3/CENP-A"/>
</dbReference>
<dbReference type="PANTHER" id="PTHR11426">
    <property type="entry name" value="HISTONE H3"/>
    <property type="match status" value="1"/>
</dbReference>
<dbReference type="Pfam" id="PF00125">
    <property type="entry name" value="Histone"/>
    <property type="match status" value="1"/>
</dbReference>
<dbReference type="PRINTS" id="PR00622">
    <property type="entry name" value="HISTONEH3"/>
</dbReference>
<dbReference type="SMART" id="SM00428">
    <property type="entry name" value="H3"/>
    <property type="match status" value="1"/>
</dbReference>
<dbReference type="SUPFAM" id="SSF47113">
    <property type="entry name" value="Histone-fold"/>
    <property type="match status" value="1"/>
</dbReference>
<dbReference type="PROSITE" id="PS00322">
    <property type="entry name" value="HISTONE_H3_1"/>
    <property type="match status" value="1"/>
</dbReference>
<dbReference type="PROSITE" id="PS00959">
    <property type="entry name" value="HISTONE_H3_2"/>
    <property type="match status" value="1"/>
</dbReference>
<keyword id="KW-0007">Acetylation</keyword>
<keyword id="KW-0158">Chromosome</keyword>
<keyword id="KW-0238">DNA-binding</keyword>
<keyword id="KW-0488">Methylation</keyword>
<keyword id="KW-0544">Nucleosome core</keyword>
<keyword id="KW-0539">Nucleus</keyword>
<keyword id="KW-0597">Phosphoprotein</keyword>